<dbReference type="EMBL" id="CP000153">
    <property type="protein sequence ID" value="ABB44487.1"/>
    <property type="molecule type" value="Genomic_DNA"/>
</dbReference>
<dbReference type="RefSeq" id="WP_011372839.1">
    <property type="nucleotide sequence ID" value="NC_007575.1"/>
</dbReference>
<dbReference type="SMR" id="Q30R94"/>
<dbReference type="STRING" id="326298.Suden_1209"/>
<dbReference type="KEGG" id="tdn:Suden_1209"/>
<dbReference type="eggNOG" id="COG0632">
    <property type="taxonomic scope" value="Bacteria"/>
</dbReference>
<dbReference type="HOGENOM" id="CLU_087936_3_1_7"/>
<dbReference type="OrthoDB" id="5293449at2"/>
<dbReference type="Proteomes" id="UP000002714">
    <property type="component" value="Chromosome"/>
</dbReference>
<dbReference type="GO" id="GO:0005737">
    <property type="term" value="C:cytoplasm"/>
    <property type="evidence" value="ECO:0007669"/>
    <property type="project" value="UniProtKB-SubCell"/>
</dbReference>
<dbReference type="GO" id="GO:0009379">
    <property type="term" value="C:Holliday junction helicase complex"/>
    <property type="evidence" value="ECO:0007669"/>
    <property type="project" value="InterPro"/>
</dbReference>
<dbReference type="GO" id="GO:0048476">
    <property type="term" value="C:Holliday junction resolvase complex"/>
    <property type="evidence" value="ECO:0007669"/>
    <property type="project" value="UniProtKB-UniRule"/>
</dbReference>
<dbReference type="GO" id="GO:0005524">
    <property type="term" value="F:ATP binding"/>
    <property type="evidence" value="ECO:0007669"/>
    <property type="project" value="InterPro"/>
</dbReference>
<dbReference type="GO" id="GO:0000400">
    <property type="term" value="F:four-way junction DNA binding"/>
    <property type="evidence" value="ECO:0007669"/>
    <property type="project" value="UniProtKB-UniRule"/>
</dbReference>
<dbReference type="GO" id="GO:0009378">
    <property type="term" value="F:four-way junction helicase activity"/>
    <property type="evidence" value="ECO:0007669"/>
    <property type="project" value="InterPro"/>
</dbReference>
<dbReference type="GO" id="GO:0006310">
    <property type="term" value="P:DNA recombination"/>
    <property type="evidence" value="ECO:0007669"/>
    <property type="project" value="UniProtKB-UniRule"/>
</dbReference>
<dbReference type="GO" id="GO:0006281">
    <property type="term" value="P:DNA repair"/>
    <property type="evidence" value="ECO:0007669"/>
    <property type="project" value="UniProtKB-UniRule"/>
</dbReference>
<dbReference type="CDD" id="cd14332">
    <property type="entry name" value="UBA_RuvA_C"/>
    <property type="match status" value="1"/>
</dbReference>
<dbReference type="Gene3D" id="1.10.150.20">
    <property type="entry name" value="5' to 3' exonuclease, C-terminal subdomain"/>
    <property type="match status" value="1"/>
</dbReference>
<dbReference type="Gene3D" id="2.40.50.140">
    <property type="entry name" value="Nucleic acid-binding proteins"/>
    <property type="match status" value="1"/>
</dbReference>
<dbReference type="HAMAP" id="MF_00031">
    <property type="entry name" value="DNA_HJ_migration_RuvA"/>
    <property type="match status" value="1"/>
</dbReference>
<dbReference type="InterPro" id="IPR013849">
    <property type="entry name" value="DNA_helicase_Holl-junc_RuvA_I"/>
</dbReference>
<dbReference type="InterPro" id="IPR003583">
    <property type="entry name" value="Hlx-hairpin-Hlx_DNA-bd_motif"/>
</dbReference>
<dbReference type="InterPro" id="IPR012340">
    <property type="entry name" value="NA-bd_OB-fold"/>
</dbReference>
<dbReference type="InterPro" id="IPR000085">
    <property type="entry name" value="RuvA"/>
</dbReference>
<dbReference type="InterPro" id="IPR010994">
    <property type="entry name" value="RuvA_2-like"/>
</dbReference>
<dbReference type="InterPro" id="IPR011114">
    <property type="entry name" value="RuvA_C"/>
</dbReference>
<dbReference type="NCBIfam" id="TIGR00084">
    <property type="entry name" value="ruvA"/>
    <property type="match status" value="1"/>
</dbReference>
<dbReference type="Pfam" id="PF14520">
    <property type="entry name" value="HHH_5"/>
    <property type="match status" value="1"/>
</dbReference>
<dbReference type="Pfam" id="PF07499">
    <property type="entry name" value="RuvA_C"/>
    <property type="match status" value="1"/>
</dbReference>
<dbReference type="Pfam" id="PF01330">
    <property type="entry name" value="RuvA_N"/>
    <property type="match status" value="1"/>
</dbReference>
<dbReference type="SMART" id="SM00278">
    <property type="entry name" value="HhH1"/>
    <property type="match status" value="2"/>
</dbReference>
<dbReference type="SUPFAM" id="SSF50249">
    <property type="entry name" value="Nucleic acid-binding proteins"/>
    <property type="match status" value="1"/>
</dbReference>
<dbReference type="SUPFAM" id="SSF47781">
    <property type="entry name" value="RuvA domain 2-like"/>
    <property type="match status" value="1"/>
</dbReference>
<name>RUVA_SULDN</name>
<accession>Q30R94</accession>
<sequence length="188" mass="20065">MIVGVRGVLVSKEPSFVHVDVGGVVYEVFISLQSFSALSGNEVKLFTSHVIREDAQLLYGFLELGEKKLFERLIKINGVGPKVAMAICSTYTPSQFAVVLNNKDITAVQRVPGIGPKSAGRILVELSGFDTELIISASEPKSLAVAQASEALESLGFKKDKISKALGSCSAVDTAILVKEALKLLQTI</sequence>
<reference key="1">
    <citation type="journal article" date="2008" name="Appl. Environ. Microbiol.">
        <title>Genome of the epsilonproteobacterial chemolithoautotroph Sulfurimonas denitrificans.</title>
        <authorList>
            <person name="Sievert S.M."/>
            <person name="Scott K.M."/>
            <person name="Klotz M.G."/>
            <person name="Chain P.S.G."/>
            <person name="Hauser L.J."/>
            <person name="Hemp J."/>
            <person name="Huegler M."/>
            <person name="Land M."/>
            <person name="Lapidus A."/>
            <person name="Larimer F.W."/>
            <person name="Lucas S."/>
            <person name="Malfatti S.A."/>
            <person name="Meyer F."/>
            <person name="Paulsen I.T."/>
            <person name="Ren Q."/>
            <person name="Simon J."/>
            <person name="Bailey K."/>
            <person name="Diaz E."/>
            <person name="Fitzpatrick K.A."/>
            <person name="Glover B."/>
            <person name="Gwatney N."/>
            <person name="Korajkic A."/>
            <person name="Long A."/>
            <person name="Mobberley J.M."/>
            <person name="Pantry S.N."/>
            <person name="Pazder G."/>
            <person name="Peterson S."/>
            <person name="Quintanilla J.D."/>
            <person name="Sprinkle R."/>
            <person name="Stephens J."/>
            <person name="Thomas P."/>
            <person name="Vaughn R."/>
            <person name="Weber M.J."/>
            <person name="Wooten L.L."/>
        </authorList>
    </citation>
    <scope>NUCLEOTIDE SEQUENCE [LARGE SCALE GENOMIC DNA]</scope>
    <source>
        <strain>ATCC 33889 / DSM 1251</strain>
    </source>
</reference>
<gene>
    <name evidence="1" type="primary">ruvA</name>
    <name type="ordered locus">Suden_1209</name>
</gene>
<keyword id="KW-0963">Cytoplasm</keyword>
<keyword id="KW-0227">DNA damage</keyword>
<keyword id="KW-0233">DNA recombination</keyword>
<keyword id="KW-0234">DNA repair</keyword>
<keyword id="KW-0238">DNA-binding</keyword>
<keyword id="KW-1185">Reference proteome</keyword>
<protein>
    <recommendedName>
        <fullName evidence="1">Holliday junction branch migration complex subunit RuvA</fullName>
    </recommendedName>
</protein>
<comment type="function">
    <text evidence="1">The RuvA-RuvB-RuvC complex processes Holliday junction (HJ) DNA during genetic recombination and DNA repair, while the RuvA-RuvB complex plays an important role in the rescue of blocked DNA replication forks via replication fork reversal (RFR). RuvA specifically binds to HJ cruciform DNA, conferring on it an open structure. The RuvB hexamer acts as an ATP-dependent pump, pulling dsDNA into and through the RuvAB complex. HJ branch migration allows RuvC to scan DNA until it finds its consensus sequence, where it cleaves and resolves the cruciform DNA.</text>
</comment>
<comment type="subunit">
    <text evidence="1">Homotetramer. Forms an RuvA(8)-RuvB(12)-Holliday junction (HJ) complex. HJ DNA is sandwiched between 2 RuvA tetramers; dsDNA enters through RuvA and exits via RuvB. An RuvB hexamer assembles on each DNA strand where it exits the tetramer. Each RuvB hexamer is contacted by two RuvA subunits (via domain III) on 2 adjacent RuvB subunits; this complex drives branch migration. In the full resolvosome a probable DNA-RuvA(4)-RuvB(12)-RuvC(2) complex forms which resolves the HJ.</text>
</comment>
<comment type="subcellular location">
    <subcellularLocation>
        <location evidence="1">Cytoplasm</location>
    </subcellularLocation>
</comment>
<comment type="domain">
    <text evidence="1">Has three domains with a flexible linker between the domains II and III and assumes an 'L' shape. Domain III is highly mobile and contacts RuvB.</text>
</comment>
<comment type="similarity">
    <text evidence="1">Belongs to the RuvA family.</text>
</comment>
<evidence type="ECO:0000255" key="1">
    <source>
        <dbReference type="HAMAP-Rule" id="MF_00031"/>
    </source>
</evidence>
<proteinExistence type="inferred from homology"/>
<feature type="chain" id="PRO_1000002591" description="Holliday junction branch migration complex subunit RuvA">
    <location>
        <begin position="1"/>
        <end position="188"/>
    </location>
</feature>
<feature type="region of interest" description="Domain I" evidence="1">
    <location>
        <begin position="1"/>
        <end position="62"/>
    </location>
</feature>
<feature type="region of interest" description="Domain II" evidence="1">
    <location>
        <begin position="63"/>
        <end position="135"/>
    </location>
</feature>
<feature type="region of interest" description="Flexible linker" evidence="1">
    <location>
        <begin position="135"/>
        <end position="139"/>
    </location>
</feature>
<feature type="region of interest" description="Domain III" evidence="1">
    <location>
        <begin position="140"/>
        <end position="188"/>
    </location>
</feature>
<organism>
    <name type="scientific">Sulfurimonas denitrificans (strain ATCC 33889 / DSM 1251)</name>
    <name type="common">Thiomicrospira denitrificans (strain ATCC 33889 / DSM 1251)</name>
    <dbReference type="NCBI Taxonomy" id="326298"/>
    <lineage>
        <taxon>Bacteria</taxon>
        <taxon>Pseudomonadati</taxon>
        <taxon>Campylobacterota</taxon>
        <taxon>Epsilonproteobacteria</taxon>
        <taxon>Campylobacterales</taxon>
        <taxon>Sulfurimonadaceae</taxon>
        <taxon>Sulfurimonas</taxon>
    </lineage>
</organism>